<dbReference type="EC" id="2.7.11.25"/>
<dbReference type="EMBL" id="U48596">
    <property type="protein sequence ID" value="AAC52596.1"/>
    <property type="molecule type" value="mRNA"/>
</dbReference>
<dbReference type="PIR" id="T10757">
    <property type="entry name" value="T10757"/>
</dbReference>
<dbReference type="RefSeq" id="NP_446339.1">
    <property type="nucleotide sequence ID" value="NM_053887.1"/>
</dbReference>
<dbReference type="SMR" id="Q62925"/>
<dbReference type="BioGRID" id="250551">
    <property type="interactions" value="1"/>
</dbReference>
<dbReference type="FunCoup" id="Q62925">
    <property type="interactions" value="1308"/>
</dbReference>
<dbReference type="IntAct" id="Q62925">
    <property type="interactions" value="85"/>
</dbReference>
<dbReference type="MINT" id="Q62925"/>
<dbReference type="STRING" id="10116.ENSRNOP00000017968"/>
<dbReference type="iPTMnet" id="Q62925"/>
<dbReference type="PhosphoSitePlus" id="Q62925"/>
<dbReference type="PaxDb" id="10116-ENSRNOP00000017968"/>
<dbReference type="GeneID" id="116667"/>
<dbReference type="KEGG" id="rno:116667"/>
<dbReference type="AGR" id="RGD:620966"/>
<dbReference type="CTD" id="4214"/>
<dbReference type="RGD" id="620966">
    <property type="gene designation" value="Map3k1"/>
</dbReference>
<dbReference type="eggNOG" id="KOG0198">
    <property type="taxonomic scope" value="Eukaryota"/>
</dbReference>
<dbReference type="InParanoid" id="Q62925"/>
<dbReference type="PhylomeDB" id="Q62925"/>
<dbReference type="BRENDA" id="2.7.12.2">
    <property type="organism ID" value="5301"/>
</dbReference>
<dbReference type="Reactome" id="R-RNO-166058">
    <property type="pathway name" value="MyD88:MAL(TIRAP) cascade initiated on plasma membrane"/>
</dbReference>
<dbReference type="Reactome" id="R-RNO-2871796">
    <property type="pathway name" value="FCERI mediated MAPK activation"/>
</dbReference>
<dbReference type="Reactome" id="R-RNO-975138">
    <property type="pathway name" value="TRAF6 mediated induction of NFkB and MAP kinases upon TLR7/8 or 9 activation"/>
</dbReference>
<dbReference type="Reactome" id="R-RNO-975871">
    <property type="pathway name" value="MyD88 cascade initiated on plasma membrane"/>
</dbReference>
<dbReference type="PRO" id="PR:Q62925"/>
<dbReference type="Proteomes" id="UP000002494">
    <property type="component" value="Unplaced"/>
</dbReference>
<dbReference type="GO" id="GO:0005737">
    <property type="term" value="C:cytoplasm"/>
    <property type="evidence" value="ECO:0000318"/>
    <property type="project" value="GO_Central"/>
</dbReference>
<dbReference type="GO" id="GO:0031941">
    <property type="term" value="C:filamentous actin"/>
    <property type="evidence" value="ECO:0000266"/>
    <property type="project" value="RGD"/>
</dbReference>
<dbReference type="GO" id="GO:0016020">
    <property type="term" value="C:membrane"/>
    <property type="evidence" value="ECO:0007669"/>
    <property type="project" value="UniProtKB-SubCell"/>
</dbReference>
<dbReference type="GO" id="GO:0070160">
    <property type="term" value="C:tight junction"/>
    <property type="evidence" value="ECO:0000266"/>
    <property type="project" value="RGD"/>
</dbReference>
<dbReference type="GO" id="GO:0005524">
    <property type="term" value="F:ATP binding"/>
    <property type="evidence" value="ECO:0007669"/>
    <property type="project" value="UniProtKB-KW"/>
</dbReference>
<dbReference type="GO" id="GO:0008092">
    <property type="term" value="F:cytoskeletal protein binding"/>
    <property type="evidence" value="ECO:0000266"/>
    <property type="project" value="RGD"/>
</dbReference>
<dbReference type="GO" id="GO:0008432">
    <property type="term" value="F:JUN kinase binding"/>
    <property type="evidence" value="ECO:0000353"/>
    <property type="project" value="RGD"/>
</dbReference>
<dbReference type="GO" id="GO:0004706">
    <property type="term" value="F:JUN kinase kinase kinase activity"/>
    <property type="evidence" value="ECO:0000314"/>
    <property type="project" value="RGD"/>
</dbReference>
<dbReference type="GO" id="GO:0004708">
    <property type="term" value="F:MAP kinase kinase activity"/>
    <property type="evidence" value="ECO:0000266"/>
    <property type="project" value="RGD"/>
</dbReference>
<dbReference type="GO" id="GO:0004709">
    <property type="term" value="F:MAP kinase kinase kinase activity"/>
    <property type="evidence" value="ECO:0000314"/>
    <property type="project" value="RGD"/>
</dbReference>
<dbReference type="GO" id="GO:0051019">
    <property type="term" value="F:mitogen-activated protein kinase binding"/>
    <property type="evidence" value="ECO:0000353"/>
    <property type="project" value="RGD"/>
</dbReference>
<dbReference type="GO" id="GO:0031434">
    <property type="term" value="F:mitogen-activated protein kinase kinase binding"/>
    <property type="evidence" value="ECO:0000353"/>
    <property type="project" value="RGD"/>
</dbReference>
<dbReference type="GO" id="GO:0004672">
    <property type="term" value="F:protein kinase activity"/>
    <property type="evidence" value="ECO:0000266"/>
    <property type="project" value="RGD"/>
</dbReference>
<dbReference type="GO" id="GO:0019901">
    <property type="term" value="F:protein kinase binding"/>
    <property type="evidence" value="ECO:0000266"/>
    <property type="project" value="RGD"/>
</dbReference>
<dbReference type="GO" id="GO:0106310">
    <property type="term" value="F:protein serine kinase activity"/>
    <property type="evidence" value="ECO:0007669"/>
    <property type="project" value="RHEA"/>
</dbReference>
<dbReference type="GO" id="GO:0004674">
    <property type="term" value="F:protein serine/threonine kinase activity"/>
    <property type="evidence" value="ECO:0000266"/>
    <property type="project" value="RGD"/>
</dbReference>
<dbReference type="GO" id="GO:0044877">
    <property type="term" value="F:protein-containing complex binding"/>
    <property type="evidence" value="ECO:0000314"/>
    <property type="project" value="RGD"/>
</dbReference>
<dbReference type="GO" id="GO:0046625">
    <property type="term" value="F:sphingolipid binding"/>
    <property type="evidence" value="ECO:0000353"/>
    <property type="project" value="RGD"/>
</dbReference>
<dbReference type="GO" id="GO:0004842">
    <property type="term" value="F:ubiquitin-protein transferase activity"/>
    <property type="evidence" value="ECO:0000315"/>
    <property type="project" value="RGD"/>
</dbReference>
<dbReference type="GO" id="GO:0008270">
    <property type="term" value="F:zinc ion binding"/>
    <property type="evidence" value="ECO:0007669"/>
    <property type="project" value="UniProtKB-KW"/>
</dbReference>
<dbReference type="GO" id="GO:0008637">
    <property type="term" value="P:apoptotic mitochondrial changes"/>
    <property type="evidence" value="ECO:0000266"/>
    <property type="project" value="RGD"/>
</dbReference>
<dbReference type="GO" id="GO:0043010">
    <property type="term" value="P:camera-type eye development"/>
    <property type="evidence" value="ECO:0000266"/>
    <property type="project" value="RGD"/>
</dbReference>
<dbReference type="GO" id="GO:0071260">
    <property type="term" value="P:cellular response to mechanical stimulus"/>
    <property type="evidence" value="ECO:0000266"/>
    <property type="project" value="RGD"/>
</dbReference>
<dbReference type="GO" id="GO:0003382">
    <property type="term" value="P:epithelial cell morphogenesis"/>
    <property type="evidence" value="ECO:0000266"/>
    <property type="project" value="RGD"/>
</dbReference>
<dbReference type="GO" id="GO:0061029">
    <property type="term" value="P:eyelid development in camera-type eye"/>
    <property type="evidence" value="ECO:0000266"/>
    <property type="project" value="RGD"/>
</dbReference>
<dbReference type="GO" id="GO:0007254">
    <property type="term" value="P:JNK cascade"/>
    <property type="evidence" value="ECO:0000266"/>
    <property type="project" value="RGD"/>
</dbReference>
<dbReference type="GO" id="GO:0000165">
    <property type="term" value="P:MAPK cascade"/>
    <property type="evidence" value="ECO:0000314"/>
    <property type="project" value="RGD"/>
</dbReference>
<dbReference type="GO" id="GO:0002011">
    <property type="term" value="P:morphogenesis of an epithelial sheet"/>
    <property type="evidence" value="ECO:0000266"/>
    <property type="project" value="RGD"/>
</dbReference>
<dbReference type="GO" id="GO:0032232">
    <property type="term" value="P:negative regulation of actin filament bundle assembly"/>
    <property type="evidence" value="ECO:0000314"/>
    <property type="project" value="RGD"/>
</dbReference>
<dbReference type="GO" id="GO:0030838">
    <property type="term" value="P:positive regulation of actin filament polymerization"/>
    <property type="evidence" value="ECO:0000266"/>
    <property type="project" value="RGD"/>
</dbReference>
<dbReference type="GO" id="GO:0043065">
    <property type="term" value="P:positive regulation of apoptotic process"/>
    <property type="evidence" value="ECO:0000315"/>
    <property type="project" value="RGD"/>
</dbReference>
<dbReference type="GO" id="GO:0090263">
    <property type="term" value="P:positive regulation of canonical Wnt signaling pathway"/>
    <property type="evidence" value="ECO:0000315"/>
    <property type="project" value="RGD"/>
</dbReference>
<dbReference type="GO" id="GO:0045893">
    <property type="term" value="P:positive regulation of DNA-templated transcription"/>
    <property type="evidence" value="ECO:0000315"/>
    <property type="project" value="RGD"/>
</dbReference>
<dbReference type="GO" id="GO:0046330">
    <property type="term" value="P:positive regulation of JNK cascade"/>
    <property type="evidence" value="ECO:0000314"/>
    <property type="project" value="RGD"/>
</dbReference>
<dbReference type="GO" id="GO:0043410">
    <property type="term" value="P:positive regulation of MAPK cascade"/>
    <property type="evidence" value="ECO:0000314"/>
    <property type="project" value="RGD"/>
</dbReference>
<dbReference type="GO" id="GO:0045944">
    <property type="term" value="P:positive regulation of transcription by RNA polymerase II"/>
    <property type="evidence" value="ECO:0000314"/>
    <property type="project" value="RGD"/>
</dbReference>
<dbReference type="GO" id="GO:0050434">
    <property type="term" value="P:positive regulation of viral transcription"/>
    <property type="evidence" value="ECO:0000314"/>
    <property type="project" value="RGD"/>
</dbReference>
<dbReference type="GO" id="GO:0000209">
    <property type="term" value="P:protein polyubiquitination"/>
    <property type="evidence" value="ECO:0000315"/>
    <property type="project" value="RGD"/>
</dbReference>
<dbReference type="GO" id="GO:0030334">
    <property type="term" value="P:regulation of cell migration"/>
    <property type="evidence" value="ECO:0000266"/>
    <property type="project" value="RGD"/>
</dbReference>
<dbReference type="GO" id="GO:0007179">
    <property type="term" value="P:transforming growth factor beta receptor signaling pathway"/>
    <property type="evidence" value="ECO:0000266"/>
    <property type="project" value="RGD"/>
</dbReference>
<dbReference type="GO" id="GO:0006511">
    <property type="term" value="P:ubiquitin-dependent protein catabolic process"/>
    <property type="evidence" value="ECO:0000316"/>
    <property type="project" value="RGD"/>
</dbReference>
<dbReference type="GO" id="GO:0042060">
    <property type="term" value="P:wound healing"/>
    <property type="evidence" value="ECO:0000266"/>
    <property type="project" value="RGD"/>
</dbReference>
<dbReference type="CDD" id="cd16494">
    <property type="entry name" value="RING-CH-C4HC3_ZSWM2"/>
    <property type="match status" value="1"/>
</dbReference>
<dbReference type="CDD" id="cd06630">
    <property type="entry name" value="STKc_MEKK1"/>
    <property type="match status" value="1"/>
</dbReference>
<dbReference type="FunFam" id="1.10.510.10:FF:000286">
    <property type="entry name" value="Mitogen-activated protein kinase kinase kinase 1 (Predicted)"/>
    <property type="match status" value="1"/>
</dbReference>
<dbReference type="FunFam" id="1.25.10.10:FF:000122">
    <property type="entry name" value="Mitogen-activated protein kinase kinase kinase 1 (Predicted)"/>
    <property type="match status" value="1"/>
</dbReference>
<dbReference type="FunFam" id="3.30.40.10:FF:000710">
    <property type="entry name" value="mitogen-activated protein kinase kinase kinase 1 isoform X1"/>
    <property type="match status" value="1"/>
</dbReference>
<dbReference type="Gene3D" id="1.25.10.10">
    <property type="entry name" value="Leucine-rich Repeat Variant"/>
    <property type="match status" value="1"/>
</dbReference>
<dbReference type="Gene3D" id="3.30.200.20">
    <property type="entry name" value="Phosphorylase Kinase, domain 1"/>
    <property type="match status" value="1"/>
</dbReference>
<dbReference type="Gene3D" id="1.10.510.10">
    <property type="entry name" value="Transferase(Phosphotransferase) domain 1"/>
    <property type="match status" value="1"/>
</dbReference>
<dbReference type="Gene3D" id="3.30.40.10">
    <property type="entry name" value="Zinc/RING finger domain, C3HC4 (zinc finger)"/>
    <property type="match status" value="1"/>
</dbReference>
<dbReference type="InterPro" id="IPR011989">
    <property type="entry name" value="ARM-like"/>
</dbReference>
<dbReference type="InterPro" id="IPR016024">
    <property type="entry name" value="ARM-type_fold"/>
</dbReference>
<dbReference type="InterPro" id="IPR011009">
    <property type="entry name" value="Kinase-like_dom_sf"/>
</dbReference>
<dbReference type="InterPro" id="IPR000719">
    <property type="entry name" value="Prot_kinase_dom"/>
</dbReference>
<dbReference type="InterPro" id="IPR017441">
    <property type="entry name" value="Protein_kinase_ATP_BS"/>
</dbReference>
<dbReference type="InterPro" id="IPR008271">
    <property type="entry name" value="Ser/Thr_kinase_AS"/>
</dbReference>
<dbReference type="InterPro" id="IPR001841">
    <property type="entry name" value="Znf_RING"/>
</dbReference>
<dbReference type="InterPro" id="IPR013083">
    <property type="entry name" value="Znf_RING/FYVE/PHD"/>
</dbReference>
<dbReference type="InterPro" id="IPR007527">
    <property type="entry name" value="Znf_SWIM"/>
</dbReference>
<dbReference type="PANTHER" id="PTHR11584:SF369">
    <property type="entry name" value="MITOGEN-ACTIVATED PROTEIN KINASE KINASE KINASE 19-RELATED"/>
    <property type="match status" value="1"/>
</dbReference>
<dbReference type="PANTHER" id="PTHR11584">
    <property type="entry name" value="SERINE/THREONINE PROTEIN KINASE"/>
    <property type="match status" value="1"/>
</dbReference>
<dbReference type="Pfam" id="PF21040">
    <property type="entry name" value="CEP104-like_TOG"/>
    <property type="match status" value="1"/>
</dbReference>
<dbReference type="Pfam" id="PF00069">
    <property type="entry name" value="Pkinase"/>
    <property type="match status" value="1"/>
</dbReference>
<dbReference type="Pfam" id="PF04434">
    <property type="entry name" value="SWIM"/>
    <property type="match status" value="1"/>
</dbReference>
<dbReference type="SMART" id="SM00220">
    <property type="entry name" value="S_TKc"/>
    <property type="match status" value="1"/>
</dbReference>
<dbReference type="SUPFAM" id="SSF48371">
    <property type="entry name" value="ARM repeat"/>
    <property type="match status" value="1"/>
</dbReference>
<dbReference type="SUPFAM" id="SSF56112">
    <property type="entry name" value="Protein kinase-like (PK-like)"/>
    <property type="match status" value="1"/>
</dbReference>
<dbReference type="SUPFAM" id="SSF57850">
    <property type="entry name" value="RING/U-box"/>
    <property type="match status" value="1"/>
</dbReference>
<dbReference type="PROSITE" id="PS00107">
    <property type="entry name" value="PROTEIN_KINASE_ATP"/>
    <property type="match status" value="1"/>
</dbReference>
<dbReference type="PROSITE" id="PS50011">
    <property type="entry name" value="PROTEIN_KINASE_DOM"/>
    <property type="match status" value="1"/>
</dbReference>
<dbReference type="PROSITE" id="PS00108">
    <property type="entry name" value="PROTEIN_KINASE_ST"/>
    <property type="match status" value="1"/>
</dbReference>
<dbReference type="PROSITE" id="PS50089">
    <property type="entry name" value="ZF_RING_2"/>
    <property type="match status" value="1"/>
</dbReference>
<dbReference type="PROSITE" id="PS50966">
    <property type="entry name" value="ZF_SWIM"/>
    <property type="match status" value="1"/>
</dbReference>
<organism>
    <name type="scientific">Rattus norvegicus</name>
    <name type="common">Rat</name>
    <dbReference type="NCBI Taxonomy" id="10116"/>
    <lineage>
        <taxon>Eukaryota</taxon>
        <taxon>Metazoa</taxon>
        <taxon>Chordata</taxon>
        <taxon>Craniata</taxon>
        <taxon>Vertebrata</taxon>
        <taxon>Euteleostomi</taxon>
        <taxon>Mammalia</taxon>
        <taxon>Eutheria</taxon>
        <taxon>Euarchontoglires</taxon>
        <taxon>Glires</taxon>
        <taxon>Rodentia</taxon>
        <taxon>Myomorpha</taxon>
        <taxon>Muroidea</taxon>
        <taxon>Muridae</taxon>
        <taxon>Murinae</taxon>
        <taxon>Rattus</taxon>
    </lineage>
</organism>
<sequence>MAAAAGDRASSSGFPGAAAASPEAGGGGGALQGSGAPAAGAGLLRETGSAGRERADWRRQQLRKVRSVELDQLPEQPLFLTASPPCPSTSPSPEPADAAAGASGFQPAAGPPPPGAASRCGSHSAELAAARDSGARSPAGAEPPSAAAPSGREMENKETLKGLHKMDDRPEERMIREKLKATCMPAWKHEWLERRNRRGPVVVKPIPIKGDGSEMSNLAAELQGEGQAGSAAPAPKGRRSPSPGSSPSGRSGKPESPGVRRKRVSPVPFQSGRITPPRRAPSPDGFSPYSPEETSRRVNKVMRARLYLLQQIGPNSFLIGGDSPDNKYRVFIGPQNCSCGRGTFCIHLLFVMLRVFQLEPSDPMLWRKTLKNFEVESLFQKYHSRRSSRIKAPSRNTIQKFVSRMSNCHTLSSSSTSTSSSENSIKDEEEQMCPICLLGMLDEESLTVCEDGCRNKLHHHCMSIWAEECRRNREPLICPLCRSKWRSHDFYSHELSSPVDSPTSLRGVQQPSSPQQPVAGSQRRNQESNFNLTHYGTQQIPPAYKDLAEPWIQAFGMELVGCLFSRNWNVREMALRRLSHDVSGALLLANGESTGTSGGGSGGSLSAGAASGSSQPSISGDVVEAFCSVLSIVCADPVYKVYVAALKTLRAMLVYTPCHSLAERIKLQRLLRPVVDTILVKCADANSRTSQLSISTLLELCKGQAGELAVGREILKAGSIGVGGVDYVLSCILGNQAESNNWQELLGRLCLIDRLLLEISAEFYPHIVSTDVSQAEPVEIRYKKLLSLLAFALQSIDNSHSMVGKLSRRIYLSSARMVTTVPPLFSKLVTMLSASGSSHFARMRRRLMAIADEVEIAEVIQLGSEDTLDGQQDSSQALAPPRYPESSSLEHTAHVEKTGKGLKATRLSASSEDISDRLAGVSVGLPSSATTEQPKPTVQTKGRPHSQCLNSSPLSPPQLMFPAISAPCSSAPSVPAGSVTDASKHRPRAFVPCKIPSASPQTQRKFSLQFQRTCSENRDSEKLSPVFTQSRPPPSSNIHRAKASRPVPGSTSKLGDASKNSMTLDLNSASQCDDSFGSGSNSGSAVIPSEETAFTPAEDKCRLDVNPELNSSIEDLLEASMPSSDTTVTFKSEVAVLSPEKAESDDTYKDDVNHNQKCKEKMEAEEEEALAIAMAMSASQDALPIVPQLQVENGEDIIIIQQDTPETLPGHTKANEPYREDTEWLKGQQIGLGAFSSCYQAQDVGTGTLMAVKQVTYVRNTSSEQEEVVEALREEIRMMSHLNHPNIIRMLGATCEKSNYNLFIEWMAGASVAHLLSKYGAFKESVVINYTEQLLRGLSYLHENQIIHRDVKGANLLIDSTGQRLRIADFGAAARLASKGTGAGEFQGQLLGTIAFMAPEVLRGQQYGRSCDVWSVGCAIIEMACAKPPWNAEKHSNHLALIFKIASATTAPSIPSHLSPGLRDVALRCLELQPQDRPPSRELLKHPVFRTTW</sequence>
<accession>Q62925</accession>
<protein>
    <recommendedName>
        <fullName>Mitogen-activated protein kinase kinase kinase 1</fullName>
        <ecNumber>2.7.11.25</ecNumber>
    </recommendedName>
    <alternativeName>
        <fullName>MAPK/ERK kinase kinase 1</fullName>
        <shortName>MEK kinase 1</shortName>
        <shortName>MEKK 1</shortName>
    </alternativeName>
</protein>
<feature type="initiator methionine" description="Removed" evidence="2">
    <location>
        <position position="1"/>
    </location>
</feature>
<feature type="chain" id="PRO_0000086242" description="Mitogen-activated protein kinase kinase kinase 1">
    <location>
        <begin position="2"/>
        <end position="1493"/>
    </location>
</feature>
<feature type="domain" description="Protein kinase" evidence="3">
    <location>
        <begin position="1224"/>
        <end position="1489"/>
    </location>
</feature>
<feature type="zinc finger region" description="SWIM-type" evidence="5">
    <location>
        <begin position="328"/>
        <end position="356"/>
    </location>
</feature>
<feature type="zinc finger region" description="RING-type" evidence="4">
    <location>
        <begin position="433"/>
        <end position="482"/>
    </location>
</feature>
<feature type="region of interest" description="Disordered" evidence="6">
    <location>
        <begin position="1"/>
        <end position="171"/>
    </location>
</feature>
<feature type="region of interest" description="Disordered" evidence="6">
    <location>
        <begin position="222"/>
        <end position="295"/>
    </location>
</feature>
<feature type="region of interest" description="Disordered" evidence="6">
    <location>
        <begin position="496"/>
        <end position="524"/>
    </location>
</feature>
<feature type="region of interest" description="Disordered" evidence="6">
    <location>
        <begin position="866"/>
        <end position="910"/>
    </location>
</feature>
<feature type="region of interest" description="Disordered" evidence="6">
    <location>
        <begin position="923"/>
        <end position="955"/>
    </location>
</feature>
<feature type="region of interest" description="Disordered" evidence="6">
    <location>
        <begin position="992"/>
        <end position="1060"/>
    </location>
</feature>
<feature type="compositionally biased region" description="Low complexity" evidence="6">
    <location>
        <begin position="1"/>
        <end position="23"/>
    </location>
</feature>
<feature type="compositionally biased region" description="Low complexity" evidence="6">
    <location>
        <begin position="33"/>
        <end position="42"/>
    </location>
</feature>
<feature type="compositionally biased region" description="Pro residues" evidence="6">
    <location>
        <begin position="84"/>
        <end position="94"/>
    </location>
</feature>
<feature type="compositionally biased region" description="Low complexity" evidence="6">
    <location>
        <begin position="95"/>
        <end position="108"/>
    </location>
</feature>
<feature type="compositionally biased region" description="Low complexity" evidence="6">
    <location>
        <begin position="135"/>
        <end position="151"/>
    </location>
</feature>
<feature type="compositionally biased region" description="Basic and acidic residues" evidence="6">
    <location>
        <begin position="152"/>
        <end position="171"/>
    </location>
</feature>
<feature type="compositionally biased region" description="Low complexity" evidence="6">
    <location>
        <begin position="230"/>
        <end position="257"/>
    </location>
</feature>
<feature type="compositionally biased region" description="Polar residues" evidence="6">
    <location>
        <begin position="496"/>
        <end position="506"/>
    </location>
</feature>
<feature type="compositionally biased region" description="Low complexity" evidence="6">
    <location>
        <begin position="507"/>
        <end position="522"/>
    </location>
</feature>
<feature type="compositionally biased region" description="Polar residues" evidence="6">
    <location>
        <begin position="925"/>
        <end position="940"/>
    </location>
</feature>
<feature type="compositionally biased region" description="Polar residues" evidence="6">
    <location>
        <begin position="998"/>
        <end position="1014"/>
    </location>
</feature>
<feature type="compositionally biased region" description="Polar residues" evidence="6">
    <location>
        <begin position="1049"/>
        <end position="1060"/>
    </location>
</feature>
<feature type="active site" description="Proton acceptor">
    <location>
        <position position="1350"/>
    </location>
</feature>
<feature type="binding site" evidence="3">
    <location>
        <begin position="1230"/>
        <end position="1238"/>
    </location>
    <ligand>
        <name>ATP</name>
        <dbReference type="ChEBI" id="CHEBI:30616"/>
    </ligand>
</feature>
<feature type="binding site" evidence="3">
    <location>
        <position position="1253"/>
    </location>
    <ligand>
        <name>ATP</name>
        <dbReference type="ChEBI" id="CHEBI:30616"/>
    </ligand>
</feature>
<feature type="modified residue" description="N-acetylalanine" evidence="2">
    <location>
        <position position="2"/>
    </location>
</feature>
<feature type="modified residue" description="Phosphoserine" evidence="2">
    <location>
        <position position="21"/>
    </location>
</feature>
<feature type="modified residue" description="Phosphoserine" evidence="11">
    <location>
        <position position="137"/>
    </location>
</feature>
<feature type="modified residue" description="Phosphoserine" evidence="2">
    <location>
        <position position="265"/>
    </location>
</feature>
<feature type="modified residue" description="Phosphothreonine" evidence="2">
    <location>
        <position position="275"/>
    </location>
</feature>
<feature type="modified residue" description="Phosphoserine" evidence="2">
    <location>
        <position position="282"/>
    </location>
</feature>
<feature type="modified residue" description="Phosphoserine" evidence="2">
    <location>
        <position position="287"/>
    </location>
</feature>
<feature type="modified residue" description="Phosphoserine" evidence="2">
    <location>
        <position position="290"/>
    </location>
</feature>
<feature type="modified residue" description="Phosphoserine" evidence="2">
    <location>
        <position position="497"/>
    </location>
</feature>
<feature type="modified residue" description="Phosphoserine" evidence="2">
    <location>
        <position position="521"/>
    </location>
</feature>
<feature type="modified residue" description="Phosphoserine" evidence="11">
    <location>
        <position position="910"/>
    </location>
</feature>
<feature type="modified residue" description="Phosphoserine" evidence="2">
    <location>
        <position position="999"/>
    </location>
</feature>
<feature type="modified residue" description="Phosphoserine" evidence="2">
    <location>
        <position position="1024"/>
    </location>
</feature>
<feature type="modified residue" description="Phosphothreonine; by autocatalysis" evidence="7">
    <location>
        <position position="1381"/>
    </location>
</feature>
<feature type="modified residue" description="Phosphothreonine; by autocatalysis" evidence="7">
    <location>
        <position position="1393"/>
    </location>
</feature>
<feature type="mutagenesis site" description="Loss of kinase activity and of autophosphorylation activity." evidence="7">
    <original>D</original>
    <variation>N</variation>
    <location>
        <position position="1350"/>
    </location>
</feature>
<feature type="mutagenesis site" description="Inactivation." evidence="9">
    <original>D</original>
    <variation>A</variation>
    <location>
        <position position="1369"/>
    </location>
</feature>
<feature type="mutagenesis site" description="Loss of kinase activity and activation by autophosphorylation; when associated with T-1393." evidence="7">
    <original>T</original>
    <variation>A</variation>
    <location>
        <position position="1381"/>
    </location>
</feature>
<feature type="mutagenesis site" description="Loss of kinase activity and activation by autophosphorylation; when associated with T-1381." evidence="7">
    <original>T</original>
    <variation>A</variation>
    <location>
        <position position="1393"/>
    </location>
</feature>
<gene>
    <name type="primary">Map3k1</name>
    <name type="synonym">Mekk</name>
    <name type="synonym">Mekk1</name>
</gene>
<comment type="function">
    <text evidence="1 7">Component of a protein kinase signal transduction cascade (PubMed:11784851). Activates the ERK and JNK kinase pathways by phosphorylation of MAP2K1 and MAP2K4 (PubMed:11784851). May phosphorylate the MAPK8/JNK1 kinase (By similarity). Activates CHUK and IKBKB, the central protein kinases of the NF-kappa-B pathway (PubMed:11784851).</text>
</comment>
<comment type="catalytic activity">
    <reaction>
        <text>L-seryl-[protein] + ATP = O-phospho-L-seryl-[protein] + ADP + H(+)</text>
        <dbReference type="Rhea" id="RHEA:17989"/>
        <dbReference type="Rhea" id="RHEA-COMP:9863"/>
        <dbReference type="Rhea" id="RHEA-COMP:11604"/>
        <dbReference type="ChEBI" id="CHEBI:15378"/>
        <dbReference type="ChEBI" id="CHEBI:29999"/>
        <dbReference type="ChEBI" id="CHEBI:30616"/>
        <dbReference type="ChEBI" id="CHEBI:83421"/>
        <dbReference type="ChEBI" id="CHEBI:456216"/>
        <dbReference type="EC" id="2.7.11.25"/>
    </reaction>
</comment>
<comment type="catalytic activity">
    <reaction>
        <text>L-threonyl-[protein] + ATP = O-phospho-L-threonyl-[protein] + ADP + H(+)</text>
        <dbReference type="Rhea" id="RHEA:46608"/>
        <dbReference type="Rhea" id="RHEA-COMP:11060"/>
        <dbReference type="Rhea" id="RHEA-COMP:11605"/>
        <dbReference type="ChEBI" id="CHEBI:15378"/>
        <dbReference type="ChEBI" id="CHEBI:30013"/>
        <dbReference type="ChEBI" id="CHEBI:30616"/>
        <dbReference type="ChEBI" id="CHEBI:61977"/>
        <dbReference type="ChEBI" id="CHEBI:456216"/>
        <dbReference type="EC" id="2.7.11.25"/>
    </reaction>
</comment>
<comment type="cofactor">
    <cofactor>
        <name>Mg(2+)</name>
        <dbReference type="ChEBI" id="CHEBI:18420"/>
    </cofactor>
</comment>
<comment type="activity regulation">
    <text evidence="7">Activated by autophosphorylation on Thr-1381 and Thr-1393 following oligomerization.</text>
</comment>
<comment type="subunit">
    <text evidence="2 8">Binds both upstream activators and downstream substrates in multimolecular complexes through its N-terminus. Oligomerizes after binding MAP4K2 or TRAF2. Interacts (via the kinase catalytic domain) with STK38 (By similarity). Interacts with GRIPAP1 (PubMed:17761173).</text>
</comment>
<comment type="interaction">
    <interactant intactId="EBI-636664">
        <id>Q62925</id>
    </interactant>
    <interactant intactId="EBI-355744">
        <id>Q12933</id>
        <label>TRAF2</label>
    </interactant>
    <organismsDiffer>true</organismsDiffer>
    <experiments>2</experiments>
</comment>
<comment type="interaction">
    <interactant intactId="EBI-636664">
        <id>Q62925</id>
    </interactant>
    <interactant intactId="EBI-1052908">
        <id>P61088</id>
        <label>UBE2N</label>
    </interactant>
    <organismsDiffer>true</organismsDiffer>
    <experiments>46</experiments>
</comment>
<comment type="subcellular location">
    <subcellularLocation>
        <location evidence="9">Membrane</location>
        <topology evidence="9">Peripheral membrane protein</topology>
    </subcellularLocation>
</comment>
<comment type="tissue specificity">
    <text>Most highly expressed in spleen, kidney and lung.</text>
</comment>
<comment type="PTM">
    <text evidence="7">Autophosphorylated.</text>
</comment>
<comment type="similarity">
    <text evidence="10">Belongs to the protein kinase superfamily. STE Ser/Thr protein kinase family. MAP kinase kinase kinase subfamily.</text>
</comment>
<reference key="1">
    <citation type="journal article" date="1996" name="Proc. Natl. Acad. Sci. U.S.A.">
        <title>Cloning of rat MEK kinase 1 cDNA reveals an endogenous membrane-associated 195-kDa protein with a large regulatory domain.</title>
        <authorList>
            <person name="Xu S."/>
            <person name="Robbins D.J."/>
            <person name="Christerson L.B."/>
            <person name="English J.M."/>
            <person name="Vanderbilt C.A."/>
            <person name="Cobb M.H."/>
        </authorList>
    </citation>
    <scope>NUCLEOTIDE SEQUENCE [MRNA]</scope>
    <scope>SUBCELLULAR LOCATION</scope>
    <scope>MUTAGENESIS OF ASP-1369</scope>
    <source>
        <tissue>Brain</tissue>
    </source>
</reference>
<reference key="2">
    <citation type="journal article" date="2002" name="Mol. Cell. Biol.">
        <title>Direct activation of mitogen-activated protein kinase kinase kinase MEKK1 by the Ste20p homologue GCK and the adapter protein TRAF2.</title>
        <authorList>
            <person name="Chadee D.N."/>
            <person name="Yuasa T."/>
            <person name="Kyriakis J.M."/>
        </authorList>
    </citation>
    <scope>FUNCTION</scope>
    <scope>ACTIVITY REGULATION</scope>
    <scope>OLIGOMERIZATION</scope>
    <scope>PHOSPHORYLATION AT THR-1381 AND THR-1393</scope>
    <scope>MUTAGENESIS OF ASP-1350; THR-1381 AND THR-1393</scope>
</reference>
<reference key="3">
    <citation type="journal article" date="2007" name="FEBS Lett.">
        <title>GRASP-1 is a neuronal scaffold protein for the JNK signaling pathway.</title>
        <authorList>
            <person name="Ye B."/>
            <person name="Yu W.P."/>
            <person name="Thomas G.M."/>
            <person name="Huganir R.L."/>
        </authorList>
    </citation>
    <scope>INTERACTION WITH GRIPAP1</scope>
</reference>
<reference key="4">
    <citation type="journal article" date="2012" name="Nat. Commun.">
        <title>Quantitative maps of protein phosphorylation sites across 14 different rat organs and tissues.</title>
        <authorList>
            <person name="Lundby A."/>
            <person name="Secher A."/>
            <person name="Lage K."/>
            <person name="Nordsborg N.B."/>
            <person name="Dmytriyev A."/>
            <person name="Lundby C."/>
            <person name="Olsen J.V."/>
        </authorList>
    </citation>
    <scope>PHOSPHORYLATION [LARGE SCALE ANALYSIS] AT SER-137 AND SER-910</scope>
    <scope>IDENTIFICATION BY MASS SPECTROMETRY [LARGE SCALE ANALYSIS]</scope>
</reference>
<evidence type="ECO:0000250" key="1">
    <source>
        <dbReference type="UniProtKB" id="P53349"/>
    </source>
</evidence>
<evidence type="ECO:0000250" key="2">
    <source>
        <dbReference type="UniProtKB" id="Q13233"/>
    </source>
</evidence>
<evidence type="ECO:0000255" key="3">
    <source>
        <dbReference type="PROSITE-ProRule" id="PRU00159"/>
    </source>
</evidence>
<evidence type="ECO:0000255" key="4">
    <source>
        <dbReference type="PROSITE-ProRule" id="PRU00175"/>
    </source>
</evidence>
<evidence type="ECO:0000255" key="5">
    <source>
        <dbReference type="PROSITE-ProRule" id="PRU00325"/>
    </source>
</evidence>
<evidence type="ECO:0000256" key="6">
    <source>
        <dbReference type="SAM" id="MobiDB-lite"/>
    </source>
</evidence>
<evidence type="ECO:0000269" key="7">
    <source>
    </source>
</evidence>
<evidence type="ECO:0000269" key="8">
    <source>
    </source>
</evidence>
<evidence type="ECO:0000269" key="9">
    <source>
    </source>
</evidence>
<evidence type="ECO:0000305" key="10"/>
<evidence type="ECO:0007744" key="11">
    <source>
    </source>
</evidence>
<proteinExistence type="evidence at protein level"/>
<name>M3K1_RAT</name>
<keyword id="KW-0007">Acetylation</keyword>
<keyword id="KW-0067">ATP-binding</keyword>
<keyword id="KW-0418">Kinase</keyword>
<keyword id="KW-0460">Magnesium</keyword>
<keyword id="KW-0472">Membrane</keyword>
<keyword id="KW-0479">Metal-binding</keyword>
<keyword id="KW-0547">Nucleotide-binding</keyword>
<keyword id="KW-0597">Phosphoprotein</keyword>
<keyword id="KW-1185">Reference proteome</keyword>
<keyword id="KW-0723">Serine/threonine-protein kinase</keyword>
<keyword id="KW-0808">Transferase</keyword>
<keyword id="KW-0862">Zinc</keyword>
<keyword id="KW-0863">Zinc-finger</keyword>